<name>RAPA_ECO24</name>
<dbReference type="EC" id="3.6.4.-" evidence="1"/>
<dbReference type="EMBL" id="CP000800">
    <property type="protein sequence ID" value="ABV19351.1"/>
    <property type="molecule type" value="Genomic_DNA"/>
</dbReference>
<dbReference type="RefSeq" id="WP_001117010.1">
    <property type="nucleotide sequence ID" value="NC_009801.1"/>
</dbReference>
<dbReference type="SMR" id="A7ZHF0"/>
<dbReference type="KEGG" id="ecw:EcE24377A_0061"/>
<dbReference type="HOGENOM" id="CLU_011520_0_0_6"/>
<dbReference type="Proteomes" id="UP000001122">
    <property type="component" value="Chromosome"/>
</dbReference>
<dbReference type="GO" id="GO:0005524">
    <property type="term" value="F:ATP binding"/>
    <property type="evidence" value="ECO:0007669"/>
    <property type="project" value="UniProtKB-UniRule"/>
</dbReference>
<dbReference type="GO" id="GO:0003677">
    <property type="term" value="F:DNA binding"/>
    <property type="evidence" value="ECO:0007669"/>
    <property type="project" value="UniProtKB-KW"/>
</dbReference>
<dbReference type="GO" id="GO:0004386">
    <property type="term" value="F:helicase activity"/>
    <property type="evidence" value="ECO:0007669"/>
    <property type="project" value="UniProtKB-UniRule"/>
</dbReference>
<dbReference type="GO" id="GO:0016817">
    <property type="term" value="F:hydrolase activity, acting on acid anhydrides"/>
    <property type="evidence" value="ECO:0007669"/>
    <property type="project" value="InterPro"/>
</dbReference>
<dbReference type="GO" id="GO:0006355">
    <property type="term" value="P:regulation of DNA-templated transcription"/>
    <property type="evidence" value="ECO:0007669"/>
    <property type="project" value="UniProtKB-UniRule"/>
</dbReference>
<dbReference type="CDD" id="cd18011">
    <property type="entry name" value="DEXDc_RapA"/>
    <property type="match status" value="1"/>
</dbReference>
<dbReference type="CDD" id="cd18793">
    <property type="entry name" value="SF2_C_SNF"/>
    <property type="match status" value="1"/>
</dbReference>
<dbReference type="FunFam" id="2.30.30.140:FF:000020">
    <property type="entry name" value="RNA polymerase-associated protein RapA"/>
    <property type="match status" value="1"/>
</dbReference>
<dbReference type="FunFam" id="2.30.30.930:FF:000001">
    <property type="entry name" value="RNA polymerase-associated protein RapA"/>
    <property type="match status" value="1"/>
</dbReference>
<dbReference type="FunFam" id="3.30.360.80:FF:000001">
    <property type="entry name" value="RNA polymerase-associated protein RapA"/>
    <property type="match status" value="1"/>
</dbReference>
<dbReference type="FunFam" id="3.40.50.10810:FF:000012">
    <property type="entry name" value="RNA polymerase-associated protein RapA"/>
    <property type="match status" value="1"/>
</dbReference>
<dbReference type="FunFam" id="3.40.50.300:FF:000350">
    <property type="entry name" value="RNA polymerase-associated protein RapA"/>
    <property type="match status" value="1"/>
</dbReference>
<dbReference type="Gene3D" id="2.30.30.140">
    <property type="match status" value="1"/>
</dbReference>
<dbReference type="Gene3D" id="2.30.30.930">
    <property type="match status" value="1"/>
</dbReference>
<dbReference type="Gene3D" id="3.30.360.80">
    <property type="match status" value="1"/>
</dbReference>
<dbReference type="Gene3D" id="6.10.140.1500">
    <property type="match status" value="1"/>
</dbReference>
<dbReference type="Gene3D" id="6.10.140.2230">
    <property type="match status" value="1"/>
</dbReference>
<dbReference type="Gene3D" id="3.40.50.300">
    <property type="entry name" value="P-loop containing nucleotide triphosphate hydrolases"/>
    <property type="match status" value="1"/>
</dbReference>
<dbReference type="Gene3D" id="3.40.50.10810">
    <property type="entry name" value="Tandem AAA-ATPase domain"/>
    <property type="match status" value="1"/>
</dbReference>
<dbReference type="HAMAP" id="MF_01821">
    <property type="entry name" value="Helicase_RapA"/>
    <property type="match status" value="1"/>
</dbReference>
<dbReference type="InterPro" id="IPR014001">
    <property type="entry name" value="Helicase_ATP-bd"/>
</dbReference>
<dbReference type="InterPro" id="IPR001650">
    <property type="entry name" value="Helicase_C-like"/>
</dbReference>
<dbReference type="InterPro" id="IPR023949">
    <property type="entry name" value="Helicase_RapA"/>
</dbReference>
<dbReference type="InterPro" id="IPR027417">
    <property type="entry name" value="P-loop_NTPase"/>
</dbReference>
<dbReference type="InterPro" id="IPR022737">
    <property type="entry name" value="RapA_C"/>
</dbReference>
<dbReference type="InterPro" id="IPR038718">
    <property type="entry name" value="SNF2-like_sf"/>
</dbReference>
<dbReference type="InterPro" id="IPR049730">
    <property type="entry name" value="SNF2/RAD54-like_C"/>
</dbReference>
<dbReference type="InterPro" id="IPR000330">
    <property type="entry name" value="SNF2_N"/>
</dbReference>
<dbReference type="InterPro" id="IPR040765">
    <property type="entry name" value="Tudor_1_RapA"/>
</dbReference>
<dbReference type="InterPro" id="IPR040766">
    <property type="entry name" value="Tudor_2_RapA"/>
</dbReference>
<dbReference type="NCBIfam" id="NF003426">
    <property type="entry name" value="PRK04914.1"/>
    <property type="match status" value="1"/>
</dbReference>
<dbReference type="PANTHER" id="PTHR45766">
    <property type="entry name" value="DNA ANNEALING HELICASE AND ENDONUCLEASE ZRANB3 FAMILY MEMBER"/>
    <property type="match status" value="1"/>
</dbReference>
<dbReference type="PANTHER" id="PTHR45766:SF6">
    <property type="entry name" value="SWI_SNF-RELATED MATRIX-ASSOCIATED ACTIN-DEPENDENT REGULATOR OF CHROMATIN SUBFAMILY A-LIKE PROTEIN 1"/>
    <property type="match status" value="1"/>
</dbReference>
<dbReference type="Pfam" id="PF00271">
    <property type="entry name" value="Helicase_C"/>
    <property type="match status" value="1"/>
</dbReference>
<dbReference type="Pfam" id="PF12137">
    <property type="entry name" value="RapA_C"/>
    <property type="match status" value="1"/>
</dbReference>
<dbReference type="Pfam" id="PF00176">
    <property type="entry name" value="SNF2-rel_dom"/>
    <property type="match status" value="1"/>
</dbReference>
<dbReference type="Pfam" id="PF18339">
    <property type="entry name" value="Tudor_1_RapA"/>
    <property type="match status" value="1"/>
</dbReference>
<dbReference type="Pfam" id="PF18337">
    <property type="entry name" value="Tudor_RapA"/>
    <property type="match status" value="1"/>
</dbReference>
<dbReference type="SMART" id="SM00487">
    <property type="entry name" value="DEXDc"/>
    <property type="match status" value="1"/>
</dbReference>
<dbReference type="SMART" id="SM00490">
    <property type="entry name" value="HELICc"/>
    <property type="match status" value="1"/>
</dbReference>
<dbReference type="SUPFAM" id="SSF52540">
    <property type="entry name" value="P-loop containing nucleoside triphosphate hydrolases"/>
    <property type="match status" value="2"/>
</dbReference>
<dbReference type="PROSITE" id="PS51192">
    <property type="entry name" value="HELICASE_ATP_BIND_1"/>
    <property type="match status" value="1"/>
</dbReference>
<dbReference type="PROSITE" id="PS51194">
    <property type="entry name" value="HELICASE_CTER"/>
    <property type="match status" value="1"/>
</dbReference>
<evidence type="ECO:0000255" key="1">
    <source>
        <dbReference type="HAMAP-Rule" id="MF_01821"/>
    </source>
</evidence>
<accession>A7ZHF0</accession>
<proteinExistence type="inferred from homology"/>
<gene>
    <name evidence="1" type="primary">rapA</name>
    <name type="ordered locus">EcE24377A_0061</name>
</gene>
<organism>
    <name type="scientific">Escherichia coli O139:H28 (strain E24377A / ETEC)</name>
    <dbReference type="NCBI Taxonomy" id="331111"/>
    <lineage>
        <taxon>Bacteria</taxon>
        <taxon>Pseudomonadati</taxon>
        <taxon>Pseudomonadota</taxon>
        <taxon>Gammaproteobacteria</taxon>
        <taxon>Enterobacterales</taxon>
        <taxon>Enterobacteriaceae</taxon>
        <taxon>Escherichia</taxon>
    </lineage>
</organism>
<keyword id="KW-0010">Activator</keyword>
<keyword id="KW-0067">ATP-binding</keyword>
<keyword id="KW-0238">DNA-binding</keyword>
<keyword id="KW-0347">Helicase</keyword>
<keyword id="KW-0378">Hydrolase</keyword>
<keyword id="KW-0547">Nucleotide-binding</keyword>
<keyword id="KW-1185">Reference proteome</keyword>
<keyword id="KW-0804">Transcription</keyword>
<keyword id="KW-0805">Transcription regulation</keyword>
<reference key="1">
    <citation type="journal article" date="2008" name="J. Bacteriol.">
        <title>The pangenome structure of Escherichia coli: comparative genomic analysis of E. coli commensal and pathogenic isolates.</title>
        <authorList>
            <person name="Rasko D.A."/>
            <person name="Rosovitz M.J."/>
            <person name="Myers G.S.A."/>
            <person name="Mongodin E.F."/>
            <person name="Fricke W.F."/>
            <person name="Gajer P."/>
            <person name="Crabtree J."/>
            <person name="Sebaihia M."/>
            <person name="Thomson N.R."/>
            <person name="Chaudhuri R."/>
            <person name="Henderson I.R."/>
            <person name="Sperandio V."/>
            <person name="Ravel J."/>
        </authorList>
    </citation>
    <scope>NUCLEOTIDE SEQUENCE [LARGE SCALE GENOMIC DNA]</scope>
    <source>
        <strain>E24377A / ETEC</strain>
    </source>
</reference>
<sequence length="968" mass="109783">MPFTLGQRWISDTESELGLGTVVAVDARTVTLLFPSTGENRLYARSDSPVTRVMFNPGDTITSHDGWQMQVEEVKEENGLLTYIGTRLDTEESGVALREVFLDSKLVFSKPQDRLFAGQIDRMDRFALRYRARKYSSEQFRMPYSGLRGQRTSLIPHQLNIAHDVGRRHAPRVLLADEVGLGKTIEAGMILHQQLLSGAAERVLIIVPETLQHQWLVEMLRRFNLRFALFDDERYAEAQHDAYNPFDTEQLVICSLDFARRSKQRLEHLCEAEWDLLVVDEAHHLVWSEDAPSREYQAIEQLAEHVPGVLLLTATPEQLGMESHFARLRLLDPNRFHDFAQFVEEQKNYRPVADAVAMLLAGNKLSNDELNMLGEMIGEQDIEPLLQAANSDSEDAQSARQELVSMLMDRHGTSRVLFRNTRNGVKGFPKRELHTIKLPLPTQYQTAIKVSGIMGARKSAEDRARDMLYPERIYQEFEGDNATWWNFDPRVEWLMGYLTSHRSQKVLVICAKAATALQLEQVLREREGIRAAVFHEGMSIIERDRAAAWFAEEDTGAQVLLCSEIGSEGRNFQFASHMVMFDLPFNPDLLEQRIGRLDRIGQAHDIQIHVPYLEKTAQSVLVRWYHEGLDAFEHTCPTGRTIYDSVYNDLINYLASPDQTEGFDDLIKNCREQHEALKAQLEQGRDRLLEIHSNGGEKAQALAESIEEQDDDTNLIAFAMNLFDIIGINQDDRGDNMIVLTPSDHMLVPDFPGLSEDGITITFDREVALAREDAQFITWEHPLIRNGLDLILSGDTGSSTISLLKNKALPVGTLLVELIYVVEAQAPKQLQLNRFLPPTPVRMLLDKNGNNLAAQVEFETFNRQLNAVNRHTGSKLVNAVQQDVHAILQLGEAQIEKSARALIDAARNEADEKLSAELSRLEALRAVNPNIRDDELTAIESNRQQIMESLDQAGWRLDALRLIVVTHQ</sequence>
<protein>
    <recommendedName>
        <fullName evidence="1">RNA polymerase-associated protein RapA</fullName>
        <ecNumber evidence="1">3.6.4.-</ecNumber>
    </recommendedName>
    <alternativeName>
        <fullName evidence="1">ATP-dependent helicase HepA</fullName>
    </alternativeName>
</protein>
<comment type="function">
    <text evidence="1">Transcription regulator that activates transcription by stimulating RNA polymerase (RNAP) recycling in case of stress conditions such as supercoiled DNA or high salt concentrations. Probably acts by releasing the RNAP, when it is trapped or immobilized on tightly supercoiled DNA. Does not activate transcription on linear DNA. Probably not involved in DNA repair.</text>
</comment>
<comment type="subunit">
    <text evidence="1">Interacts with the RNAP. Has a higher affinity for the core RNAP than for the holoenzyme. Its ATPase activity is stimulated by binding to RNAP.</text>
</comment>
<comment type="similarity">
    <text evidence="1">Belongs to the SNF2/RAD54 helicase family. RapA subfamily.</text>
</comment>
<feature type="chain" id="PRO_1000088351" description="RNA polymerase-associated protein RapA">
    <location>
        <begin position="1"/>
        <end position="968"/>
    </location>
</feature>
<feature type="domain" description="Helicase ATP-binding" evidence="1">
    <location>
        <begin position="164"/>
        <end position="334"/>
    </location>
</feature>
<feature type="domain" description="Helicase C-terminal" evidence="1">
    <location>
        <begin position="490"/>
        <end position="662"/>
    </location>
</feature>
<feature type="short sequence motif" description="DEAH box">
    <location>
        <begin position="280"/>
        <end position="283"/>
    </location>
</feature>
<feature type="binding site" evidence="1">
    <location>
        <begin position="177"/>
        <end position="184"/>
    </location>
    <ligand>
        <name>ATP</name>
        <dbReference type="ChEBI" id="CHEBI:30616"/>
    </ligand>
</feature>